<organism>
    <name type="scientific">Chromobacterium violaceum (strain ATCC 12472 / DSM 30191 / JCM 1249 / CCUG 213 / NBRC 12614 / NCIMB 9131 / NCTC 9757 / MK)</name>
    <dbReference type="NCBI Taxonomy" id="243365"/>
    <lineage>
        <taxon>Bacteria</taxon>
        <taxon>Pseudomonadati</taxon>
        <taxon>Pseudomonadota</taxon>
        <taxon>Betaproteobacteria</taxon>
        <taxon>Neisseriales</taxon>
        <taxon>Chromobacteriaceae</taxon>
        <taxon>Chromobacterium</taxon>
    </lineage>
</organism>
<accession>Q7NSB3</accession>
<reference key="1">
    <citation type="journal article" date="2003" name="Proc. Natl. Acad. Sci. U.S.A.">
        <title>The complete genome sequence of Chromobacterium violaceum reveals remarkable and exploitable bacterial adaptability.</title>
        <authorList>
            <person name="Vasconcelos A.T.R."/>
            <person name="de Almeida D.F."/>
            <person name="Hungria M."/>
            <person name="Guimaraes C.T."/>
            <person name="Antonio R.V."/>
            <person name="Almeida F.C."/>
            <person name="de Almeida L.G.P."/>
            <person name="de Almeida R."/>
            <person name="Alves-Gomes J.A."/>
            <person name="Andrade E.M."/>
            <person name="Araripe J."/>
            <person name="de Araujo M.F.F."/>
            <person name="Astolfi-Filho S."/>
            <person name="Azevedo V."/>
            <person name="Baptista A.J."/>
            <person name="Bataus L.A.M."/>
            <person name="Batista J.S."/>
            <person name="Belo A."/>
            <person name="van den Berg C."/>
            <person name="Bogo M."/>
            <person name="Bonatto S."/>
            <person name="Bordignon J."/>
            <person name="Brigido M.M."/>
            <person name="Brito C.A."/>
            <person name="Brocchi M."/>
            <person name="Burity H.A."/>
            <person name="Camargo A.A."/>
            <person name="Cardoso D.D.P."/>
            <person name="Carneiro N.P."/>
            <person name="Carraro D.M."/>
            <person name="Carvalho C.M.B."/>
            <person name="Cascardo J.C.M."/>
            <person name="Cavada B.S."/>
            <person name="Chueire L.M.O."/>
            <person name="Creczynski-Pasa T.B."/>
            <person name="Cunha-Junior N.C."/>
            <person name="Fagundes N."/>
            <person name="Falcao C.L."/>
            <person name="Fantinatti F."/>
            <person name="Farias I.P."/>
            <person name="Felipe M.S.S."/>
            <person name="Ferrari L.P."/>
            <person name="Ferro J.A."/>
            <person name="Ferro M.I.T."/>
            <person name="Franco G.R."/>
            <person name="Freitas N.S.A."/>
            <person name="Furlan L.R."/>
            <person name="Gazzinelli R.T."/>
            <person name="Gomes E.A."/>
            <person name="Goncalves P.R."/>
            <person name="Grangeiro T.B."/>
            <person name="Grattapaglia D."/>
            <person name="Grisard E.C."/>
            <person name="Hanna E.S."/>
            <person name="Jardim S.N."/>
            <person name="Laurino J."/>
            <person name="Leoi L.C.T."/>
            <person name="Lima L.F.A."/>
            <person name="Loureiro M.F."/>
            <person name="Lyra M.C.C.P."/>
            <person name="Madeira H.M.F."/>
            <person name="Manfio G.P."/>
            <person name="Maranhao A.Q."/>
            <person name="Martins W.S."/>
            <person name="di Mauro S.M.Z."/>
            <person name="de Medeiros S.R.B."/>
            <person name="Meissner R.V."/>
            <person name="Moreira M.A.M."/>
            <person name="Nascimento F.F."/>
            <person name="Nicolas M.F."/>
            <person name="Oliveira J.G."/>
            <person name="Oliveira S.C."/>
            <person name="Paixao R.F.C."/>
            <person name="Parente J.A."/>
            <person name="Pedrosa F.O."/>
            <person name="Pena S.D.J."/>
            <person name="Pereira J.O."/>
            <person name="Pereira M."/>
            <person name="Pinto L.S.R.C."/>
            <person name="Pinto L.S."/>
            <person name="Porto J.I.R."/>
            <person name="Potrich D.P."/>
            <person name="Ramalho-Neto C.E."/>
            <person name="Reis A.M.M."/>
            <person name="Rigo L.U."/>
            <person name="Rondinelli E."/>
            <person name="Santos E.B.P."/>
            <person name="Santos F.R."/>
            <person name="Schneider M.P.C."/>
            <person name="Seuanez H.N."/>
            <person name="Silva A.M.R."/>
            <person name="da Silva A.L.C."/>
            <person name="Silva D.W."/>
            <person name="Silva R."/>
            <person name="Simoes I.C."/>
            <person name="Simon D."/>
            <person name="Soares C.M.A."/>
            <person name="Soares R.B.A."/>
            <person name="Souza E.M."/>
            <person name="Souza K.R.L."/>
            <person name="Souza R.C."/>
            <person name="Steffens M.B.R."/>
            <person name="Steindel M."/>
            <person name="Teixeira S.R."/>
            <person name="Urmenyi T."/>
            <person name="Vettore A."/>
            <person name="Wassem R."/>
            <person name="Zaha A."/>
            <person name="Simpson A.J.G."/>
        </authorList>
    </citation>
    <scope>NUCLEOTIDE SEQUENCE [LARGE SCALE GENOMIC DNA]</scope>
    <source>
        <strain>ATCC 12472 / DSM 30191 / JCM 1249 / CCUG 213 / NBRC 12614 / NCIMB 9131 / NCTC 9757 / MK</strain>
    </source>
</reference>
<keyword id="KW-1185">Reference proteome</keyword>
<proteinExistence type="inferred from homology"/>
<sequence>MSLTTLPGVCGIGLRAPHYREALDARPELGWVEVHSENFFDGGTPLAMLRRVAECWPLSLHGVGLGLGSAARPDRGHLASLRRLVDETCPAAVSEHLSFNHSPHRYVNDLLPIPYTRAALDTVAGHVSETQDALGRTILLENLSSYVEFPDNEMNEGEFLAELVRITGCGVLLDVNNLYVNRINLGTDTDAVLAALPPDAIGEIHLAGYSEREGMLVDTHSQAVHDEVWRFYREVIRRIGPRPTLIEWDLDIPPLATLQAEAAKAQAILGGADERS</sequence>
<gene>
    <name type="ordered locus">CV_3513</name>
</gene>
<dbReference type="EMBL" id="AE016825">
    <property type="protein sequence ID" value="AAQ61174.1"/>
    <property type="molecule type" value="Genomic_DNA"/>
</dbReference>
<dbReference type="RefSeq" id="WP_011137060.1">
    <property type="nucleotide sequence ID" value="NC_005085.1"/>
</dbReference>
<dbReference type="SMR" id="Q7NSB3"/>
<dbReference type="STRING" id="243365.CV_3513"/>
<dbReference type="KEGG" id="cvi:CV_3513"/>
<dbReference type="eggNOG" id="COG3220">
    <property type="taxonomic scope" value="Bacteria"/>
</dbReference>
<dbReference type="HOGENOM" id="CLU_064263_0_0_4"/>
<dbReference type="OrthoDB" id="9763101at2"/>
<dbReference type="Proteomes" id="UP000001424">
    <property type="component" value="Chromosome"/>
</dbReference>
<dbReference type="Gene3D" id="3.20.20.150">
    <property type="entry name" value="Divalent-metal-dependent TIM barrel enzymes"/>
    <property type="match status" value="1"/>
</dbReference>
<dbReference type="HAMAP" id="MF_00697">
    <property type="entry name" value="UPF0276"/>
    <property type="match status" value="1"/>
</dbReference>
<dbReference type="InterPro" id="IPR007801">
    <property type="entry name" value="MbnB/TglH/ChrH"/>
</dbReference>
<dbReference type="InterPro" id="IPR036237">
    <property type="entry name" value="Xyl_isomerase-like_sf"/>
</dbReference>
<dbReference type="NCBIfam" id="NF003818">
    <property type="entry name" value="PRK05409.1"/>
    <property type="match status" value="1"/>
</dbReference>
<dbReference type="PANTHER" id="PTHR42194">
    <property type="entry name" value="UPF0276 PROTEIN HI_1600"/>
    <property type="match status" value="1"/>
</dbReference>
<dbReference type="PANTHER" id="PTHR42194:SF1">
    <property type="entry name" value="UPF0276 PROTEIN HI_1600"/>
    <property type="match status" value="1"/>
</dbReference>
<dbReference type="Pfam" id="PF05114">
    <property type="entry name" value="MbnB_TglH_ChrH"/>
    <property type="match status" value="1"/>
</dbReference>
<dbReference type="SUPFAM" id="SSF51658">
    <property type="entry name" value="Xylose isomerase-like"/>
    <property type="match status" value="1"/>
</dbReference>
<name>Y3513_CHRVO</name>
<evidence type="ECO:0000255" key="1">
    <source>
        <dbReference type="HAMAP-Rule" id="MF_00697"/>
    </source>
</evidence>
<protein>
    <recommendedName>
        <fullName evidence="1">UPF0276 protein CV_3513</fullName>
    </recommendedName>
</protein>
<feature type="chain" id="PRO_0000192695" description="UPF0276 protein CV_3513">
    <location>
        <begin position="1"/>
        <end position="276"/>
    </location>
</feature>
<comment type="similarity">
    <text evidence="1">Belongs to the UPF0276 family.</text>
</comment>